<evidence type="ECO:0000255" key="1">
    <source>
        <dbReference type="HAMAP-Rule" id="MF_00323"/>
    </source>
</evidence>
<organism>
    <name type="scientific">Bdellovibrio bacteriovorus (strain ATCC 15356 / DSM 50701 / NCIMB 9529 / HD100)</name>
    <dbReference type="NCBI Taxonomy" id="264462"/>
    <lineage>
        <taxon>Bacteria</taxon>
        <taxon>Pseudomonadati</taxon>
        <taxon>Bdellovibrionota</taxon>
        <taxon>Bdellovibrionia</taxon>
        <taxon>Bdellovibrionales</taxon>
        <taxon>Pseudobdellovibrionaceae</taxon>
        <taxon>Bdellovibrio</taxon>
    </lineage>
</organism>
<name>HEMH_BDEBA</name>
<proteinExistence type="inferred from homology"/>
<gene>
    <name evidence="1" type="primary">hemH</name>
    <name type="ordered locus">Bd3456</name>
</gene>
<dbReference type="EC" id="4.98.1.1" evidence="1"/>
<dbReference type="EMBL" id="BX842655">
    <property type="protein sequence ID" value="CAE78249.1"/>
    <property type="molecule type" value="Genomic_DNA"/>
</dbReference>
<dbReference type="RefSeq" id="WP_011165787.1">
    <property type="nucleotide sequence ID" value="NC_005363.1"/>
</dbReference>
<dbReference type="SMR" id="Q6MHT3"/>
<dbReference type="STRING" id="264462.Bd3456"/>
<dbReference type="GeneID" id="93014266"/>
<dbReference type="KEGG" id="bba:Bd3456"/>
<dbReference type="eggNOG" id="COG0276">
    <property type="taxonomic scope" value="Bacteria"/>
</dbReference>
<dbReference type="HOGENOM" id="CLU_018884_0_1_7"/>
<dbReference type="UniPathway" id="UPA00252">
    <property type="reaction ID" value="UER00325"/>
</dbReference>
<dbReference type="Proteomes" id="UP000008080">
    <property type="component" value="Chromosome"/>
</dbReference>
<dbReference type="GO" id="GO:0005737">
    <property type="term" value="C:cytoplasm"/>
    <property type="evidence" value="ECO:0007669"/>
    <property type="project" value="UniProtKB-SubCell"/>
</dbReference>
<dbReference type="GO" id="GO:0004325">
    <property type="term" value="F:ferrochelatase activity"/>
    <property type="evidence" value="ECO:0007669"/>
    <property type="project" value="UniProtKB-UniRule"/>
</dbReference>
<dbReference type="GO" id="GO:0046872">
    <property type="term" value="F:metal ion binding"/>
    <property type="evidence" value="ECO:0007669"/>
    <property type="project" value="UniProtKB-KW"/>
</dbReference>
<dbReference type="GO" id="GO:0006783">
    <property type="term" value="P:heme biosynthetic process"/>
    <property type="evidence" value="ECO:0007669"/>
    <property type="project" value="UniProtKB-UniRule"/>
</dbReference>
<dbReference type="CDD" id="cd00419">
    <property type="entry name" value="Ferrochelatase_C"/>
    <property type="match status" value="1"/>
</dbReference>
<dbReference type="CDD" id="cd03411">
    <property type="entry name" value="Ferrochelatase_N"/>
    <property type="match status" value="1"/>
</dbReference>
<dbReference type="Gene3D" id="3.40.50.1400">
    <property type="match status" value="2"/>
</dbReference>
<dbReference type="HAMAP" id="MF_00323">
    <property type="entry name" value="Ferrochelatase"/>
    <property type="match status" value="1"/>
</dbReference>
<dbReference type="InterPro" id="IPR001015">
    <property type="entry name" value="Ferrochelatase"/>
</dbReference>
<dbReference type="InterPro" id="IPR033644">
    <property type="entry name" value="Ferrochelatase_C"/>
</dbReference>
<dbReference type="InterPro" id="IPR033659">
    <property type="entry name" value="Ferrochelatase_N"/>
</dbReference>
<dbReference type="NCBIfam" id="TIGR00109">
    <property type="entry name" value="hemH"/>
    <property type="match status" value="1"/>
</dbReference>
<dbReference type="PANTHER" id="PTHR11108">
    <property type="entry name" value="FERROCHELATASE"/>
    <property type="match status" value="1"/>
</dbReference>
<dbReference type="PANTHER" id="PTHR11108:SF1">
    <property type="entry name" value="FERROCHELATASE, MITOCHONDRIAL"/>
    <property type="match status" value="1"/>
</dbReference>
<dbReference type="Pfam" id="PF00762">
    <property type="entry name" value="Ferrochelatase"/>
    <property type="match status" value="1"/>
</dbReference>
<dbReference type="SUPFAM" id="SSF53800">
    <property type="entry name" value="Chelatase"/>
    <property type="match status" value="1"/>
</dbReference>
<protein>
    <recommendedName>
        <fullName evidence="1">Ferrochelatase</fullName>
        <ecNumber evidence="1">4.98.1.1</ecNumber>
    </recommendedName>
    <alternativeName>
        <fullName evidence="1">Heme synthase</fullName>
    </alternativeName>
    <alternativeName>
        <fullName evidence="1">Protoheme ferro-lyase</fullName>
    </alternativeName>
</protein>
<comment type="function">
    <text evidence="1">Catalyzes the ferrous insertion into protoporphyrin IX.</text>
</comment>
<comment type="catalytic activity">
    <reaction evidence="1">
        <text>heme b + 2 H(+) = protoporphyrin IX + Fe(2+)</text>
        <dbReference type="Rhea" id="RHEA:22584"/>
        <dbReference type="ChEBI" id="CHEBI:15378"/>
        <dbReference type="ChEBI" id="CHEBI:29033"/>
        <dbReference type="ChEBI" id="CHEBI:57306"/>
        <dbReference type="ChEBI" id="CHEBI:60344"/>
        <dbReference type="EC" id="4.98.1.1"/>
    </reaction>
</comment>
<comment type="pathway">
    <text evidence="1">Porphyrin-containing compound metabolism; protoheme biosynthesis; protoheme from protoporphyrin-IX: step 1/1.</text>
</comment>
<comment type="subcellular location">
    <subcellularLocation>
        <location evidence="1">Cytoplasm</location>
    </subcellularLocation>
</comment>
<comment type="similarity">
    <text evidence="1">Belongs to the ferrochelatase family.</text>
</comment>
<sequence length="335" mass="37482">MGKKGLLLINIGSPKSYQVNDVKKYLSEFLMDEDVITLPYVLRWPLVNLLIVPRRAPFSAENYKKVWMKEGSPIAVYTRRFAALLQEELKDQFVVKVGLQYSEPSVESALKDLQQAGVDEILVAPMFPQYAEATNGSSFKLAERMAKKLHLTAPLRRLPAFFDDASFVGTSVKLVEETLQDKEVDHYLFSFHGLPESHVRKIPGCLTTEDCCFEKNACAKNCYRAQCFATATAIAESLNLAPSHWSVAFQSRLGRAEWLKPATDHSLEVLAKTGKKNIAVICPSFVADCIETLEEIGIGGQETFHEHGGDQYYLVPCVNDNPKWVQGFADLVKSI</sequence>
<accession>Q6MHT3</accession>
<reference key="1">
    <citation type="journal article" date="2004" name="Science">
        <title>A predator unmasked: life cycle of Bdellovibrio bacteriovorus from a genomic perspective.</title>
        <authorList>
            <person name="Rendulic S."/>
            <person name="Jagtap P."/>
            <person name="Rosinus A."/>
            <person name="Eppinger M."/>
            <person name="Baar C."/>
            <person name="Lanz C."/>
            <person name="Keller H."/>
            <person name="Lambert C."/>
            <person name="Evans K.J."/>
            <person name="Goesmann A."/>
            <person name="Meyer F."/>
            <person name="Sockett R.E."/>
            <person name="Schuster S.C."/>
        </authorList>
    </citation>
    <scope>NUCLEOTIDE SEQUENCE [LARGE SCALE GENOMIC DNA]</scope>
    <source>
        <strain>ATCC 15356 / DSM 50701 / NCIMB 9529 / HD100</strain>
    </source>
</reference>
<feature type="chain" id="PRO_0000175115" description="Ferrochelatase">
    <location>
        <begin position="1"/>
        <end position="335"/>
    </location>
</feature>
<feature type="binding site" evidence="1">
    <location>
        <position position="192"/>
    </location>
    <ligand>
        <name>Fe cation</name>
        <dbReference type="ChEBI" id="CHEBI:24875"/>
    </ligand>
</feature>
<feature type="binding site" evidence="1">
    <location>
        <position position="291"/>
    </location>
    <ligand>
        <name>Fe cation</name>
        <dbReference type="ChEBI" id="CHEBI:24875"/>
    </ligand>
</feature>
<keyword id="KW-0963">Cytoplasm</keyword>
<keyword id="KW-0350">Heme biosynthesis</keyword>
<keyword id="KW-0408">Iron</keyword>
<keyword id="KW-0456">Lyase</keyword>
<keyword id="KW-0479">Metal-binding</keyword>
<keyword id="KW-0627">Porphyrin biosynthesis</keyword>
<keyword id="KW-1185">Reference proteome</keyword>